<reference key="1">
    <citation type="submission" date="2007-03" db="EMBL/GenBank/DDBJ databases">
        <title>Complete sequence of Prosthecochloris vibrioformis DSM 265.</title>
        <authorList>
            <consortium name="US DOE Joint Genome Institute"/>
            <person name="Copeland A."/>
            <person name="Lucas S."/>
            <person name="Lapidus A."/>
            <person name="Barry K."/>
            <person name="Detter J.C."/>
            <person name="Glavina del Rio T."/>
            <person name="Hammon N."/>
            <person name="Israni S."/>
            <person name="Pitluck S."/>
            <person name="Schmutz J."/>
            <person name="Larimer F."/>
            <person name="Land M."/>
            <person name="Hauser L."/>
            <person name="Mikhailova N."/>
            <person name="Li T."/>
            <person name="Overmann J."/>
            <person name="Schuster S.C."/>
            <person name="Bryant D.A."/>
            <person name="Richardson P."/>
        </authorList>
    </citation>
    <scope>NUCLEOTIDE SEQUENCE [LARGE SCALE GENOMIC DNA]</scope>
    <source>
        <strain>DSM 265 / 1930</strain>
    </source>
</reference>
<organism>
    <name type="scientific">Chlorobium phaeovibrioides (strain DSM 265 / 1930)</name>
    <name type="common">Prosthecochloris vibrioformis (strain DSM 265)</name>
    <dbReference type="NCBI Taxonomy" id="290318"/>
    <lineage>
        <taxon>Bacteria</taxon>
        <taxon>Pseudomonadati</taxon>
        <taxon>Chlorobiota</taxon>
        <taxon>Chlorobiia</taxon>
        <taxon>Chlorobiales</taxon>
        <taxon>Chlorobiaceae</taxon>
        <taxon>Chlorobium/Pelodictyon group</taxon>
        <taxon>Chlorobium</taxon>
    </lineage>
</organism>
<gene>
    <name type="ordered locus">Cvib_0387</name>
</gene>
<evidence type="ECO:0000255" key="1">
    <source>
        <dbReference type="HAMAP-Rule" id="MF_00527"/>
    </source>
</evidence>
<protein>
    <recommendedName>
        <fullName evidence="1">Putative 3-methyladenine DNA glycosylase</fullName>
        <ecNumber evidence="1">3.2.2.-</ecNumber>
    </recommendedName>
</protein>
<sequence length="196" mass="21670">MERLEKQFFIIPTLQLATALLGKTFVRILPGNRVLKGRIVETEAYLGEGDEASHAWRGKTDRNAPMFEAPGTLYVYFVYGCHHLVNIVSEPRETAGAVLLRAMEPLEGQGFMERQRGTASASDLMSGPAKIAQALDINRSHSGSDLFSGEFFLENAPRIPENQIGTSSRIGISRGRELQWRKFVIGSPHLSQGQPS</sequence>
<feature type="chain" id="PRO_1000081702" description="Putative 3-methyladenine DNA glycosylase">
    <location>
        <begin position="1"/>
        <end position="196"/>
    </location>
</feature>
<comment type="similarity">
    <text evidence="1">Belongs to the DNA glycosylase MPG family.</text>
</comment>
<proteinExistence type="inferred from homology"/>
<accession>A4SD50</accession>
<name>3MGH_CHLPM</name>
<keyword id="KW-0227">DNA damage</keyword>
<keyword id="KW-0234">DNA repair</keyword>
<keyword id="KW-0378">Hydrolase</keyword>
<dbReference type="EC" id="3.2.2.-" evidence="1"/>
<dbReference type="EMBL" id="CP000607">
    <property type="protein sequence ID" value="ABP36409.1"/>
    <property type="molecule type" value="Genomic_DNA"/>
</dbReference>
<dbReference type="SMR" id="A4SD50"/>
<dbReference type="STRING" id="290318.Cvib_0387"/>
<dbReference type="KEGG" id="pvi:Cvib_0387"/>
<dbReference type="eggNOG" id="COG2094">
    <property type="taxonomic scope" value="Bacteria"/>
</dbReference>
<dbReference type="HOGENOM" id="CLU_060471_4_1_10"/>
<dbReference type="OrthoDB" id="9794313at2"/>
<dbReference type="GO" id="GO:0003905">
    <property type="term" value="F:alkylbase DNA N-glycosylase activity"/>
    <property type="evidence" value="ECO:0007669"/>
    <property type="project" value="InterPro"/>
</dbReference>
<dbReference type="GO" id="GO:0003677">
    <property type="term" value="F:DNA binding"/>
    <property type="evidence" value="ECO:0007669"/>
    <property type="project" value="InterPro"/>
</dbReference>
<dbReference type="GO" id="GO:0006284">
    <property type="term" value="P:base-excision repair"/>
    <property type="evidence" value="ECO:0007669"/>
    <property type="project" value="InterPro"/>
</dbReference>
<dbReference type="CDD" id="cd00540">
    <property type="entry name" value="AAG"/>
    <property type="match status" value="1"/>
</dbReference>
<dbReference type="FunFam" id="3.10.300.10:FF:000001">
    <property type="entry name" value="Putative 3-methyladenine DNA glycosylase"/>
    <property type="match status" value="1"/>
</dbReference>
<dbReference type="Gene3D" id="3.10.300.10">
    <property type="entry name" value="Methylpurine-DNA glycosylase (MPG)"/>
    <property type="match status" value="1"/>
</dbReference>
<dbReference type="HAMAP" id="MF_00527">
    <property type="entry name" value="3MGH"/>
    <property type="match status" value="1"/>
</dbReference>
<dbReference type="InterPro" id="IPR011034">
    <property type="entry name" value="Formyl_transferase-like_C_sf"/>
</dbReference>
<dbReference type="InterPro" id="IPR003180">
    <property type="entry name" value="MPG"/>
</dbReference>
<dbReference type="InterPro" id="IPR036995">
    <property type="entry name" value="MPG_sf"/>
</dbReference>
<dbReference type="NCBIfam" id="TIGR00567">
    <property type="entry name" value="3mg"/>
    <property type="match status" value="1"/>
</dbReference>
<dbReference type="NCBIfam" id="NF002003">
    <property type="entry name" value="PRK00802.1-3"/>
    <property type="match status" value="1"/>
</dbReference>
<dbReference type="PANTHER" id="PTHR10429">
    <property type="entry name" value="DNA-3-METHYLADENINE GLYCOSYLASE"/>
    <property type="match status" value="1"/>
</dbReference>
<dbReference type="PANTHER" id="PTHR10429:SF0">
    <property type="entry name" value="DNA-3-METHYLADENINE GLYCOSYLASE"/>
    <property type="match status" value="1"/>
</dbReference>
<dbReference type="Pfam" id="PF02245">
    <property type="entry name" value="Pur_DNA_glyco"/>
    <property type="match status" value="1"/>
</dbReference>
<dbReference type="SUPFAM" id="SSF50486">
    <property type="entry name" value="FMT C-terminal domain-like"/>
    <property type="match status" value="1"/>
</dbReference>